<sequence length="72" mass="8226">MDAYAVQHFYNNARKPLAPTTLHSGNLPAAAYENVMFIRKLVCRENAPGAHERPFCAHHDYNKENLSEKSRL</sequence>
<comment type="similarity">
    <text evidence="1">Belongs to the baculoviridae 8 kDa protein family.</text>
</comment>
<accession>O10351</accession>
<gene>
    <name type="ORF">ORF112</name>
</gene>
<evidence type="ECO:0000305" key="1"/>
<organismHost>
    <name type="scientific">Orgyia pseudotsugata</name>
    <name type="common">Douglas-fir tussock moth</name>
    <dbReference type="NCBI Taxonomy" id="33414"/>
</organismHost>
<protein>
    <recommendedName>
        <fullName>Uncharacterized 8.2 kDa protein</fullName>
    </recommendedName>
</protein>
<organism>
    <name type="scientific">Orgyia pseudotsugata multicapsid polyhedrosis virus</name>
    <name type="common">OpMNPV</name>
    <dbReference type="NCBI Taxonomy" id="262177"/>
    <lineage>
        <taxon>Viruses</taxon>
        <taxon>Viruses incertae sedis</taxon>
        <taxon>Naldaviricetes</taxon>
        <taxon>Lefavirales</taxon>
        <taxon>Baculoviridae</taxon>
        <taxon>Alphabaculovirus</taxon>
        <taxon>Alphabaculovirus orpseudotsugatae</taxon>
    </lineage>
</organism>
<feature type="chain" id="PRO_0000133048" description="Uncharacterized 8.2 kDa protein">
    <location>
        <begin position="1"/>
        <end position="72"/>
    </location>
</feature>
<name>Y111_NPVOP</name>
<keyword id="KW-1185">Reference proteome</keyword>
<reference key="1">
    <citation type="journal article" date="1997" name="Virology">
        <title>The sequence of the Orgyia pseudotsugata multinucleocapsid nuclear polyhedrosis virus genome.</title>
        <authorList>
            <person name="Ahrens C.H."/>
            <person name="Russell R.R."/>
            <person name="Funk C.J."/>
            <person name="Evans J."/>
            <person name="Harwood S."/>
            <person name="Rohrmann G.F."/>
        </authorList>
    </citation>
    <scope>NUCLEOTIDE SEQUENCE [LARGE SCALE GENOMIC DNA]</scope>
</reference>
<dbReference type="EMBL" id="U75930">
    <property type="protein sequence ID" value="AAC59111.1"/>
    <property type="molecule type" value="Genomic_DNA"/>
</dbReference>
<dbReference type="RefSeq" id="NP_046268.1">
    <property type="nucleotide sequence ID" value="NC_001875.2"/>
</dbReference>
<dbReference type="KEGG" id="vg:911971"/>
<dbReference type="OrthoDB" id="24249at10239"/>
<dbReference type="Proteomes" id="UP000009248">
    <property type="component" value="Genome"/>
</dbReference>
<dbReference type="InterPro" id="IPR009289">
    <property type="entry name" value="Baculo_8kDa"/>
</dbReference>
<dbReference type="Pfam" id="PF06096">
    <property type="entry name" value="Baculo_8kDa"/>
    <property type="match status" value="1"/>
</dbReference>
<proteinExistence type="inferred from homology"/>